<evidence type="ECO:0000255" key="1">
    <source>
        <dbReference type="HAMAP-Rule" id="MF_00052"/>
    </source>
</evidence>
<evidence type="ECO:0000255" key="2">
    <source>
        <dbReference type="PROSITE-ProRule" id="PRU01319"/>
    </source>
</evidence>
<reference key="1">
    <citation type="journal article" date="2007" name="J. Bacteriol.">
        <title>Genome of the opportunistic pathogen Streptococcus sanguinis.</title>
        <authorList>
            <person name="Xu P."/>
            <person name="Alves J.M."/>
            <person name="Kitten T."/>
            <person name="Brown A."/>
            <person name="Chen Z."/>
            <person name="Ozaki L.S."/>
            <person name="Manque P."/>
            <person name="Ge X."/>
            <person name="Serrano M.G."/>
            <person name="Puiu D."/>
            <person name="Hendricks S."/>
            <person name="Wang Y."/>
            <person name="Chaplin M.D."/>
            <person name="Akan D."/>
            <person name="Paik S."/>
            <person name="Peterson D.L."/>
            <person name="Macrina F.L."/>
            <person name="Buck G.A."/>
        </authorList>
    </citation>
    <scope>NUCLEOTIDE SEQUENCE [LARGE SCALE GENOMIC DNA]</scope>
    <source>
        <strain>SK36</strain>
    </source>
</reference>
<name>RNH2_STRSV</name>
<accession>A3CN38</accession>
<keyword id="KW-0963">Cytoplasm</keyword>
<keyword id="KW-0255">Endonuclease</keyword>
<keyword id="KW-0378">Hydrolase</keyword>
<keyword id="KW-0464">Manganese</keyword>
<keyword id="KW-0479">Metal-binding</keyword>
<keyword id="KW-0540">Nuclease</keyword>
<keyword id="KW-1185">Reference proteome</keyword>
<feature type="chain" id="PRO_1000031217" description="Ribonuclease HII">
    <location>
        <begin position="1"/>
        <end position="254"/>
    </location>
</feature>
<feature type="domain" description="RNase H type-2" evidence="2">
    <location>
        <begin position="70"/>
        <end position="254"/>
    </location>
</feature>
<feature type="binding site" evidence="1">
    <location>
        <position position="76"/>
    </location>
    <ligand>
        <name>a divalent metal cation</name>
        <dbReference type="ChEBI" id="CHEBI:60240"/>
    </ligand>
</feature>
<feature type="binding site" evidence="1">
    <location>
        <position position="77"/>
    </location>
    <ligand>
        <name>a divalent metal cation</name>
        <dbReference type="ChEBI" id="CHEBI:60240"/>
    </ligand>
</feature>
<feature type="binding site" evidence="1">
    <location>
        <position position="168"/>
    </location>
    <ligand>
        <name>a divalent metal cation</name>
        <dbReference type="ChEBI" id="CHEBI:60240"/>
    </ligand>
</feature>
<comment type="function">
    <text evidence="1">Endonuclease that specifically degrades the RNA of RNA-DNA hybrids.</text>
</comment>
<comment type="catalytic activity">
    <reaction evidence="1">
        <text>Endonucleolytic cleavage to 5'-phosphomonoester.</text>
        <dbReference type="EC" id="3.1.26.4"/>
    </reaction>
</comment>
<comment type="cofactor">
    <cofactor evidence="1">
        <name>Mn(2+)</name>
        <dbReference type="ChEBI" id="CHEBI:29035"/>
    </cofactor>
    <cofactor evidence="1">
        <name>Mg(2+)</name>
        <dbReference type="ChEBI" id="CHEBI:18420"/>
    </cofactor>
    <text evidence="1">Manganese or magnesium. Binds 1 divalent metal ion per monomer in the absence of substrate. May bind a second metal ion after substrate binding.</text>
</comment>
<comment type="subcellular location">
    <subcellularLocation>
        <location evidence="1">Cytoplasm</location>
    </subcellularLocation>
</comment>
<comment type="similarity">
    <text evidence="1">Belongs to the RNase HII family.</text>
</comment>
<sequence>MATIKEIQQRLELVTDLADPFLAEAANDQRSGVQKAIEKRKRAIQAELDEDLRLEQMLRYEKELYKADYQAIAGIDEVGRGPLAGPVVAAAVILPPECKIKGLNDSKKIPKKKHQEIYQAVLDKALAVGVGLMNNEIIDQVNIYEATKLAMKEALSKLSLKPDYLLIDAMKLDVDIPQESIIKGDANSLSIAAASIVAKVTRDKLMADYDKKFPGYDFAKNAGYGTRSHLQGLERSGVTPIHRKTFEPIKSMYE</sequence>
<dbReference type="EC" id="3.1.26.4" evidence="1"/>
<dbReference type="EMBL" id="CP000387">
    <property type="protein sequence ID" value="ABN44593.1"/>
    <property type="molecule type" value="Genomic_DNA"/>
</dbReference>
<dbReference type="RefSeq" id="WP_011836976.1">
    <property type="nucleotide sequence ID" value="NC_009009.1"/>
</dbReference>
<dbReference type="RefSeq" id="YP_001035143.1">
    <property type="nucleotide sequence ID" value="NC_009009.1"/>
</dbReference>
<dbReference type="SMR" id="A3CN38"/>
<dbReference type="STRING" id="388919.SSA_1188"/>
<dbReference type="KEGG" id="ssa:SSA_1188"/>
<dbReference type="PATRIC" id="fig|388919.9.peg.1130"/>
<dbReference type="eggNOG" id="COG0164">
    <property type="taxonomic scope" value="Bacteria"/>
</dbReference>
<dbReference type="HOGENOM" id="CLU_036532_2_1_9"/>
<dbReference type="OrthoDB" id="9803420at2"/>
<dbReference type="Proteomes" id="UP000002148">
    <property type="component" value="Chromosome"/>
</dbReference>
<dbReference type="GO" id="GO:0005737">
    <property type="term" value="C:cytoplasm"/>
    <property type="evidence" value="ECO:0007669"/>
    <property type="project" value="UniProtKB-SubCell"/>
</dbReference>
<dbReference type="GO" id="GO:0032299">
    <property type="term" value="C:ribonuclease H2 complex"/>
    <property type="evidence" value="ECO:0007669"/>
    <property type="project" value="TreeGrafter"/>
</dbReference>
<dbReference type="GO" id="GO:0030145">
    <property type="term" value="F:manganese ion binding"/>
    <property type="evidence" value="ECO:0007669"/>
    <property type="project" value="UniProtKB-UniRule"/>
</dbReference>
<dbReference type="GO" id="GO:0003723">
    <property type="term" value="F:RNA binding"/>
    <property type="evidence" value="ECO:0007669"/>
    <property type="project" value="InterPro"/>
</dbReference>
<dbReference type="GO" id="GO:0004523">
    <property type="term" value="F:RNA-DNA hybrid ribonuclease activity"/>
    <property type="evidence" value="ECO:0007669"/>
    <property type="project" value="UniProtKB-UniRule"/>
</dbReference>
<dbReference type="GO" id="GO:0043137">
    <property type="term" value="P:DNA replication, removal of RNA primer"/>
    <property type="evidence" value="ECO:0007669"/>
    <property type="project" value="TreeGrafter"/>
</dbReference>
<dbReference type="GO" id="GO:0006298">
    <property type="term" value="P:mismatch repair"/>
    <property type="evidence" value="ECO:0007669"/>
    <property type="project" value="TreeGrafter"/>
</dbReference>
<dbReference type="CDD" id="cd07182">
    <property type="entry name" value="RNase_HII_bacteria_HII_like"/>
    <property type="match status" value="1"/>
</dbReference>
<dbReference type="FunFam" id="3.30.420.10:FF:000006">
    <property type="entry name" value="Ribonuclease HII"/>
    <property type="match status" value="1"/>
</dbReference>
<dbReference type="Gene3D" id="3.30.420.10">
    <property type="entry name" value="Ribonuclease H-like superfamily/Ribonuclease H"/>
    <property type="match status" value="1"/>
</dbReference>
<dbReference type="HAMAP" id="MF_00052_B">
    <property type="entry name" value="RNase_HII_B"/>
    <property type="match status" value="1"/>
</dbReference>
<dbReference type="InterPro" id="IPR022898">
    <property type="entry name" value="RNase_HII"/>
</dbReference>
<dbReference type="InterPro" id="IPR001352">
    <property type="entry name" value="RNase_HII/HIII"/>
</dbReference>
<dbReference type="InterPro" id="IPR024567">
    <property type="entry name" value="RNase_HII/HIII_dom"/>
</dbReference>
<dbReference type="InterPro" id="IPR012337">
    <property type="entry name" value="RNaseH-like_sf"/>
</dbReference>
<dbReference type="InterPro" id="IPR036397">
    <property type="entry name" value="RNaseH_sf"/>
</dbReference>
<dbReference type="NCBIfam" id="NF000594">
    <property type="entry name" value="PRK00015.1-1"/>
    <property type="match status" value="1"/>
</dbReference>
<dbReference type="NCBIfam" id="NF000595">
    <property type="entry name" value="PRK00015.1-3"/>
    <property type="match status" value="1"/>
</dbReference>
<dbReference type="PANTHER" id="PTHR10954">
    <property type="entry name" value="RIBONUCLEASE H2 SUBUNIT A"/>
    <property type="match status" value="1"/>
</dbReference>
<dbReference type="PANTHER" id="PTHR10954:SF18">
    <property type="entry name" value="RIBONUCLEASE HII"/>
    <property type="match status" value="1"/>
</dbReference>
<dbReference type="Pfam" id="PF01351">
    <property type="entry name" value="RNase_HII"/>
    <property type="match status" value="1"/>
</dbReference>
<dbReference type="SUPFAM" id="SSF53098">
    <property type="entry name" value="Ribonuclease H-like"/>
    <property type="match status" value="1"/>
</dbReference>
<dbReference type="PROSITE" id="PS51975">
    <property type="entry name" value="RNASE_H_2"/>
    <property type="match status" value="1"/>
</dbReference>
<gene>
    <name evidence="1" type="primary">rnhB</name>
    <name type="ordered locus">SSA_1188</name>
</gene>
<organism>
    <name type="scientific">Streptococcus sanguinis (strain SK36)</name>
    <dbReference type="NCBI Taxonomy" id="388919"/>
    <lineage>
        <taxon>Bacteria</taxon>
        <taxon>Bacillati</taxon>
        <taxon>Bacillota</taxon>
        <taxon>Bacilli</taxon>
        <taxon>Lactobacillales</taxon>
        <taxon>Streptococcaceae</taxon>
        <taxon>Streptococcus</taxon>
    </lineage>
</organism>
<protein>
    <recommendedName>
        <fullName evidence="1">Ribonuclease HII</fullName>
        <shortName evidence="1">RNase HII</shortName>
        <ecNumber evidence="1">3.1.26.4</ecNumber>
    </recommendedName>
</protein>
<proteinExistence type="inferred from homology"/>